<dbReference type="EMBL" id="AE009439">
    <property type="protein sequence ID" value="AAM02791.1"/>
    <property type="molecule type" value="Genomic_DNA"/>
</dbReference>
<dbReference type="RefSeq" id="WP_011019946.1">
    <property type="nucleotide sequence ID" value="NC_003551.1"/>
</dbReference>
<dbReference type="SMR" id="Q8TV23"/>
<dbReference type="FunCoup" id="Q8TV23">
    <property type="interactions" value="147"/>
</dbReference>
<dbReference type="STRING" id="190192.MK1578"/>
<dbReference type="PaxDb" id="190192-MK1578"/>
<dbReference type="EnsemblBacteria" id="AAM02791">
    <property type="protein sequence ID" value="AAM02791"/>
    <property type="gene ID" value="MK1578"/>
</dbReference>
<dbReference type="GeneID" id="1478173"/>
<dbReference type="KEGG" id="mka:MK1578"/>
<dbReference type="PATRIC" id="fig|190192.8.peg.1739"/>
<dbReference type="HOGENOM" id="CLU_058171_3_0_2"/>
<dbReference type="InParanoid" id="Q8TV23"/>
<dbReference type="OrthoDB" id="371797at2157"/>
<dbReference type="Proteomes" id="UP000001826">
    <property type="component" value="Chromosome"/>
</dbReference>
<dbReference type="GO" id="GO:0015935">
    <property type="term" value="C:small ribosomal subunit"/>
    <property type="evidence" value="ECO:0007669"/>
    <property type="project" value="InterPro"/>
</dbReference>
<dbReference type="GO" id="GO:0003735">
    <property type="term" value="F:structural constituent of ribosome"/>
    <property type="evidence" value="ECO:0007669"/>
    <property type="project" value="InterPro"/>
</dbReference>
<dbReference type="GO" id="GO:0006412">
    <property type="term" value="P:translation"/>
    <property type="evidence" value="ECO:0007669"/>
    <property type="project" value="UniProtKB-UniRule"/>
</dbReference>
<dbReference type="CDD" id="cd01425">
    <property type="entry name" value="RPS2"/>
    <property type="match status" value="1"/>
</dbReference>
<dbReference type="FunFam" id="3.40.50.10490:FF:000030">
    <property type="entry name" value="30S ribosomal protein S2"/>
    <property type="match status" value="1"/>
</dbReference>
<dbReference type="Gene3D" id="3.40.50.10490">
    <property type="entry name" value="Glucose-6-phosphate isomerase like protein, domain 1"/>
    <property type="match status" value="1"/>
</dbReference>
<dbReference type="HAMAP" id="MF_00291_A">
    <property type="entry name" value="Ribosomal_uS2_A"/>
    <property type="match status" value="1"/>
</dbReference>
<dbReference type="HAMAP" id="MF_00291_B">
    <property type="entry name" value="Ribosomal_uS2_B"/>
    <property type="match status" value="1"/>
</dbReference>
<dbReference type="InterPro" id="IPR001865">
    <property type="entry name" value="Ribosomal_uS2"/>
</dbReference>
<dbReference type="InterPro" id="IPR023454">
    <property type="entry name" value="Ribosomal_uS2_arc"/>
</dbReference>
<dbReference type="InterPro" id="IPR005706">
    <property type="entry name" value="Ribosomal_uS2_bac/mit/plastid"/>
</dbReference>
<dbReference type="InterPro" id="IPR018130">
    <property type="entry name" value="Ribosomal_uS2_CS"/>
</dbReference>
<dbReference type="InterPro" id="IPR005707">
    <property type="entry name" value="Ribosomal_uS2_euk/arc"/>
</dbReference>
<dbReference type="InterPro" id="IPR023591">
    <property type="entry name" value="Ribosomal_uS2_flav_dom_sf"/>
</dbReference>
<dbReference type="NCBIfam" id="TIGR01012">
    <property type="entry name" value="uS2_euk_arch"/>
    <property type="match status" value="1"/>
</dbReference>
<dbReference type="PANTHER" id="PTHR11489">
    <property type="entry name" value="40S RIBOSOMAL PROTEIN SA"/>
    <property type="match status" value="1"/>
</dbReference>
<dbReference type="Pfam" id="PF00318">
    <property type="entry name" value="Ribosomal_S2"/>
    <property type="match status" value="2"/>
</dbReference>
<dbReference type="PRINTS" id="PR00395">
    <property type="entry name" value="RIBOSOMALS2"/>
</dbReference>
<dbReference type="SUPFAM" id="SSF52313">
    <property type="entry name" value="Ribosomal protein S2"/>
    <property type="match status" value="1"/>
</dbReference>
<dbReference type="PROSITE" id="PS00962">
    <property type="entry name" value="RIBOSOMAL_S2_1"/>
    <property type="match status" value="1"/>
</dbReference>
<dbReference type="PROSITE" id="PS00963">
    <property type="entry name" value="RIBOSOMAL_S2_2"/>
    <property type="match status" value="1"/>
</dbReference>
<reference key="1">
    <citation type="journal article" date="2002" name="Proc. Natl. Acad. Sci. U.S.A.">
        <title>The complete genome of hyperthermophile Methanopyrus kandleri AV19 and monophyly of archaeal methanogens.</title>
        <authorList>
            <person name="Slesarev A.I."/>
            <person name="Mezhevaya K.V."/>
            <person name="Makarova K.S."/>
            <person name="Polushin N.N."/>
            <person name="Shcherbinina O.V."/>
            <person name="Shakhova V.V."/>
            <person name="Belova G.I."/>
            <person name="Aravind L."/>
            <person name="Natale D.A."/>
            <person name="Rogozin I.B."/>
            <person name="Tatusov R.L."/>
            <person name="Wolf Y.I."/>
            <person name="Stetter K.O."/>
            <person name="Malykh A.G."/>
            <person name="Koonin E.V."/>
            <person name="Kozyavkin S.A."/>
        </authorList>
    </citation>
    <scope>NUCLEOTIDE SEQUENCE [LARGE SCALE GENOMIC DNA]</scope>
    <source>
        <strain>AV19 / DSM 6324 / JCM 9639 / NBRC 100938</strain>
    </source>
</reference>
<accession>Q8TV23</accession>
<sequence length="203" mass="22822">MSENDDLLVPLNDYLAAGVHIGTQQKTKDMEPFIYRTRADGLHVIDVRKTDERIRIAANFLSMYNTDEILVVSRRYYGQKPVSKFAEATGTTAIPGRFVPGTLTNPEYDGYLEPEVIVLTDPRADFQALVEAQSVGIPIVALCDTDNFTGNVDLAIPTNNKGRKALALVYWLLARELLKKLGRLEEDEEFEYDPEDFEGPPPR</sequence>
<organism>
    <name type="scientific">Methanopyrus kandleri (strain AV19 / DSM 6324 / JCM 9639 / NBRC 100938)</name>
    <dbReference type="NCBI Taxonomy" id="190192"/>
    <lineage>
        <taxon>Archaea</taxon>
        <taxon>Methanobacteriati</taxon>
        <taxon>Methanobacteriota</taxon>
        <taxon>Methanomada group</taxon>
        <taxon>Methanopyri</taxon>
        <taxon>Methanopyrales</taxon>
        <taxon>Methanopyraceae</taxon>
        <taxon>Methanopyrus</taxon>
    </lineage>
</organism>
<evidence type="ECO:0000255" key="1">
    <source>
        <dbReference type="HAMAP-Rule" id="MF_00291"/>
    </source>
</evidence>
<evidence type="ECO:0000305" key="2"/>
<name>RS2_METKA</name>
<proteinExistence type="inferred from homology"/>
<keyword id="KW-1185">Reference proteome</keyword>
<keyword id="KW-0687">Ribonucleoprotein</keyword>
<keyword id="KW-0689">Ribosomal protein</keyword>
<protein>
    <recommendedName>
        <fullName evidence="1">Small ribosomal subunit protein uS2</fullName>
    </recommendedName>
    <alternativeName>
        <fullName evidence="2">30S ribosomal protein S2</fullName>
    </alternativeName>
</protein>
<gene>
    <name evidence="1" type="primary">rps2</name>
    <name type="ordered locus">MK1578</name>
</gene>
<feature type="chain" id="PRO_0000134324" description="Small ribosomal subunit protein uS2">
    <location>
        <begin position="1"/>
        <end position="203"/>
    </location>
</feature>
<comment type="similarity">
    <text evidence="1">Belongs to the universal ribosomal protein uS2 family.</text>
</comment>